<keyword id="KW-0028">Amino-acid biosynthesis</keyword>
<keyword id="KW-0057">Aromatic amino acid biosynthesis</keyword>
<keyword id="KW-0170">Cobalt</keyword>
<keyword id="KW-0963">Cytoplasm</keyword>
<keyword id="KW-0456">Lyase</keyword>
<keyword id="KW-0479">Metal-binding</keyword>
<keyword id="KW-0520">NAD</keyword>
<keyword id="KW-0547">Nucleotide-binding</keyword>
<keyword id="KW-1185">Reference proteome</keyword>
<keyword id="KW-0862">Zinc</keyword>
<dbReference type="EC" id="4.2.3.4" evidence="1"/>
<dbReference type="EMBL" id="CR931997">
    <property type="protein sequence ID" value="CAI37195.1"/>
    <property type="molecule type" value="Genomic_DNA"/>
</dbReference>
<dbReference type="RefSeq" id="WP_011273600.1">
    <property type="nucleotide sequence ID" value="NC_007164.1"/>
</dbReference>
<dbReference type="SMR" id="Q4JVG2"/>
<dbReference type="STRING" id="306537.jk1031"/>
<dbReference type="KEGG" id="cjk:jk1031"/>
<dbReference type="PATRIC" id="fig|306537.10.peg.1043"/>
<dbReference type="eggNOG" id="COG0337">
    <property type="taxonomic scope" value="Bacteria"/>
</dbReference>
<dbReference type="HOGENOM" id="CLU_001201_0_3_11"/>
<dbReference type="OrthoDB" id="9806583at2"/>
<dbReference type="UniPathway" id="UPA00053">
    <property type="reaction ID" value="UER00085"/>
</dbReference>
<dbReference type="Proteomes" id="UP000000545">
    <property type="component" value="Chromosome"/>
</dbReference>
<dbReference type="GO" id="GO:0005737">
    <property type="term" value="C:cytoplasm"/>
    <property type="evidence" value="ECO:0007669"/>
    <property type="project" value="UniProtKB-SubCell"/>
</dbReference>
<dbReference type="GO" id="GO:0003856">
    <property type="term" value="F:3-dehydroquinate synthase activity"/>
    <property type="evidence" value="ECO:0007669"/>
    <property type="project" value="UniProtKB-UniRule"/>
</dbReference>
<dbReference type="GO" id="GO:0046872">
    <property type="term" value="F:metal ion binding"/>
    <property type="evidence" value="ECO:0007669"/>
    <property type="project" value="UniProtKB-KW"/>
</dbReference>
<dbReference type="GO" id="GO:0000166">
    <property type="term" value="F:nucleotide binding"/>
    <property type="evidence" value="ECO:0007669"/>
    <property type="project" value="UniProtKB-KW"/>
</dbReference>
<dbReference type="GO" id="GO:0008652">
    <property type="term" value="P:amino acid biosynthetic process"/>
    <property type="evidence" value="ECO:0007669"/>
    <property type="project" value="UniProtKB-KW"/>
</dbReference>
<dbReference type="GO" id="GO:0009073">
    <property type="term" value="P:aromatic amino acid family biosynthetic process"/>
    <property type="evidence" value="ECO:0007669"/>
    <property type="project" value="UniProtKB-KW"/>
</dbReference>
<dbReference type="GO" id="GO:0009423">
    <property type="term" value="P:chorismate biosynthetic process"/>
    <property type="evidence" value="ECO:0007669"/>
    <property type="project" value="UniProtKB-UniRule"/>
</dbReference>
<dbReference type="CDD" id="cd08195">
    <property type="entry name" value="DHQS"/>
    <property type="match status" value="1"/>
</dbReference>
<dbReference type="FunFam" id="3.40.50.1970:FF:000007">
    <property type="entry name" value="Pentafunctional AROM polypeptide"/>
    <property type="match status" value="1"/>
</dbReference>
<dbReference type="Gene3D" id="3.40.50.1970">
    <property type="match status" value="1"/>
</dbReference>
<dbReference type="Gene3D" id="1.20.1090.10">
    <property type="entry name" value="Dehydroquinate synthase-like - alpha domain"/>
    <property type="match status" value="1"/>
</dbReference>
<dbReference type="HAMAP" id="MF_00110">
    <property type="entry name" value="DHQ_synthase"/>
    <property type="match status" value="1"/>
</dbReference>
<dbReference type="InterPro" id="IPR050071">
    <property type="entry name" value="Dehydroquinate_synthase"/>
</dbReference>
<dbReference type="InterPro" id="IPR016037">
    <property type="entry name" value="DHQ_synth_AroB"/>
</dbReference>
<dbReference type="InterPro" id="IPR030963">
    <property type="entry name" value="DHQ_synth_fam"/>
</dbReference>
<dbReference type="InterPro" id="IPR030960">
    <property type="entry name" value="DHQS/DOIS_N"/>
</dbReference>
<dbReference type="InterPro" id="IPR056179">
    <property type="entry name" value="DHQS_C"/>
</dbReference>
<dbReference type="NCBIfam" id="TIGR01357">
    <property type="entry name" value="aroB"/>
    <property type="match status" value="1"/>
</dbReference>
<dbReference type="PANTHER" id="PTHR43622">
    <property type="entry name" value="3-DEHYDROQUINATE SYNTHASE"/>
    <property type="match status" value="1"/>
</dbReference>
<dbReference type="PANTHER" id="PTHR43622:SF7">
    <property type="entry name" value="3-DEHYDROQUINATE SYNTHASE, CHLOROPLASTIC"/>
    <property type="match status" value="1"/>
</dbReference>
<dbReference type="Pfam" id="PF01761">
    <property type="entry name" value="DHQ_synthase"/>
    <property type="match status" value="1"/>
</dbReference>
<dbReference type="Pfam" id="PF24621">
    <property type="entry name" value="DHQS_C"/>
    <property type="match status" value="1"/>
</dbReference>
<dbReference type="PIRSF" id="PIRSF001455">
    <property type="entry name" value="DHQ_synth"/>
    <property type="match status" value="1"/>
</dbReference>
<dbReference type="SUPFAM" id="SSF56796">
    <property type="entry name" value="Dehydroquinate synthase-like"/>
    <property type="match status" value="1"/>
</dbReference>
<feature type="chain" id="PRO_0000231082" description="3-dehydroquinate synthase">
    <location>
        <begin position="1"/>
        <end position="368"/>
    </location>
</feature>
<feature type="binding site" evidence="1">
    <location>
        <begin position="80"/>
        <end position="85"/>
    </location>
    <ligand>
        <name>NAD(+)</name>
        <dbReference type="ChEBI" id="CHEBI:57540"/>
    </ligand>
</feature>
<feature type="binding site" evidence="1">
    <location>
        <begin position="114"/>
        <end position="118"/>
    </location>
    <ligand>
        <name>NAD(+)</name>
        <dbReference type="ChEBI" id="CHEBI:57540"/>
    </ligand>
</feature>
<feature type="binding site" evidence="1">
    <location>
        <begin position="138"/>
        <end position="139"/>
    </location>
    <ligand>
        <name>NAD(+)</name>
        <dbReference type="ChEBI" id="CHEBI:57540"/>
    </ligand>
</feature>
<feature type="binding site" evidence="1">
    <location>
        <position position="151"/>
    </location>
    <ligand>
        <name>NAD(+)</name>
        <dbReference type="ChEBI" id="CHEBI:57540"/>
    </ligand>
</feature>
<feature type="binding site" evidence="1">
    <location>
        <position position="160"/>
    </location>
    <ligand>
        <name>NAD(+)</name>
        <dbReference type="ChEBI" id="CHEBI:57540"/>
    </ligand>
</feature>
<feature type="binding site" evidence="1">
    <location>
        <position position="193"/>
    </location>
    <ligand>
        <name>Zn(2+)</name>
        <dbReference type="ChEBI" id="CHEBI:29105"/>
    </ligand>
</feature>
<feature type="binding site" evidence="1">
    <location>
        <position position="255"/>
    </location>
    <ligand>
        <name>Zn(2+)</name>
        <dbReference type="ChEBI" id="CHEBI:29105"/>
    </ligand>
</feature>
<feature type="binding site" evidence="1">
    <location>
        <position position="271"/>
    </location>
    <ligand>
        <name>Zn(2+)</name>
        <dbReference type="ChEBI" id="CHEBI:29105"/>
    </ligand>
</feature>
<proteinExistence type="inferred from homology"/>
<name>AROB_CORJK</name>
<comment type="function">
    <text evidence="1">Catalyzes the conversion of 3-deoxy-D-arabino-heptulosonate 7-phosphate (DAHP) to dehydroquinate (DHQ).</text>
</comment>
<comment type="catalytic activity">
    <reaction evidence="1">
        <text>7-phospho-2-dehydro-3-deoxy-D-arabino-heptonate = 3-dehydroquinate + phosphate</text>
        <dbReference type="Rhea" id="RHEA:21968"/>
        <dbReference type="ChEBI" id="CHEBI:32364"/>
        <dbReference type="ChEBI" id="CHEBI:43474"/>
        <dbReference type="ChEBI" id="CHEBI:58394"/>
        <dbReference type="EC" id="4.2.3.4"/>
    </reaction>
</comment>
<comment type="cofactor">
    <cofactor evidence="1">
        <name>Co(2+)</name>
        <dbReference type="ChEBI" id="CHEBI:48828"/>
    </cofactor>
    <cofactor evidence="1">
        <name>Zn(2+)</name>
        <dbReference type="ChEBI" id="CHEBI:29105"/>
    </cofactor>
    <text evidence="1">Binds 1 divalent metal cation per subunit. Can use either Co(2+) or Zn(2+).</text>
</comment>
<comment type="cofactor">
    <cofactor evidence="1">
        <name>NAD(+)</name>
        <dbReference type="ChEBI" id="CHEBI:57540"/>
    </cofactor>
</comment>
<comment type="pathway">
    <text evidence="1">Metabolic intermediate biosynthesis; chorismate biosynthesis; chorismate from D-erythrose 4-phosphate and phosphoenolpyruvate: step 2/7.</text>
</comment>
<comment type="subcellular location">
    <subcellularLocation>
        <location evidence="1">Cytoplasm</location>
    </subcellularLocation>
</comment>
<comment type="similarity">
    <text evidence="1">Belongs to the sugar phosphate cyclases superfamily. Dehydroquinate synthase family.</text>
</comment>
<sequence>MTNSHSADFKQQRIRVASQSSYEVVIDRGIDFATEEILKAAGATANYLIIHQPALADRAAELSKRLSAAGYAAHTHQIDDAESAKTAQSAAECWDVCAQVGLTRADTIIGLGGGAATDLAGFIAATWMRGIKVVHYPTTLLAMVDAAVGGKTGINTPAGKNLVGSFHEPSAVIVDLEVLETLPEAEMIAGSAEIVKAGFIADTEILGIYEADPQAALDPHGSLPELIARAIQVKADVVAVDLKESSLREILNYGHTYGHAVEHYEDYRWRHGQAVAVGMIFEAELAKAAGLLSEADVRRHRDILNSVGLATSYDGAELDELLAAMGRDKKNKGGKIRFVVLEQIGKPTRLEGPSEELLRAAYAASVGA</sequence>
<accession>Q4JVG2</accession>
<reference key="1">
    <citation type="journal article" date="2005" name="J. Bacteriol.">
        <title>Complete genome sequence and analysis of the multiresistant nosocomial pathogen Corynebacterium jeikeium K411, a lipid-requiring bacterium of the human skin flora.</title>
        <authorList>
            <person name="Tauch A."/>
            <person name="Kaiser O."/>
            <person name="Hain T."/>
            <person name="Goesmann A."/>
            <person name="Weisshaar B."/>
            <person name="Albersmeier A."/>
            <person name="Bekel T."/>
            <person name="Bischoff N."/>
            <person name="Brune I."/>
            <person name="Chakraborty T."/>
            <person name="Kalinowski J."/>
            <person name="Meyer F."/>
            <person name="Rupp O."/>
            <person name="Schneiker S."/>
            <person name="Viehoever P."/>
            <person name="Puehler A."/>
        </authorList>
    </citation>
    <scope>NUCLEOTIDE SEQUENCE [LARGE SCALE GENOMIC DNA]</scope>
    <source>
        <strain>K411</strain>
    </source>
</reference>
<gene>
    <name evidence="1" type="primary">aroB</name>
    <name type="ordered locus">jk1031</name>
</gene>
<organism>
    <name type="scientific">Corynebacterium jeikeium (strain K411)</name>
    <dbReference type="NCBI Taxonomy" id="306537"/>
    <lineage>
        <taxon>Bacteria</taxon>
        <taxon>Bacillati</taxon>
        <taxon>Actinomycetota</taxon>
        <taxon>Actinomycetes</taxon>
        <taxon>Mycobacteriales</taxon>
        <taxon>Corynebacteriaceae</taxon>
        <taxon>Corynebacterium</taxon>
    </lineage>
</organism>
<protein>
    <recommendedName>
        <fullName evidence="1">3-dehydroquinate synthase</fullName>
        <shortName evidence="1">DHQS</shortName>
        <ecNumber evidence="1">4.2.3.4</ecNumber>
    </recommendedName>
</protein>
<evidence type="ECO:0000255" key="1">
    <source>
        <dbReference type="HAMAP-Rule" id="MF_00110"/>
    </source>
</evidence>